<sequence>MGKYYQIFFLLYLLCILYVISCGYINPYSPYSSPCLFAPIIGYLYMGGSLSSNSSNNNNNNNNNNNNNNNNNNNNNNNNNNKDSKLTENCNNNSSNNNSDNKSNIKNKQHHHHSNFRNRRGKSNNKNSSDNDDCTKCNKRHHTQSSSYDTSELHQSVSSGLGGSMGSGSQALTDIEKDINEFMNANPSHSLNKQQIQQQQQLQQQQQQLLKQQQQQQQQQQQQQQQQQQQQLEKQRKEQEETEKKKQLELQQQQQLQQQQQNGNGLIIEEDMMEGRILRNISKVYRDVNENQPKSYYDYEGYRINWKNVDRYEVIQKIGRGKYSEVFSGIDIETSDEVVIKVLKPVQKLKIQREIKILESLNGGPNIIPLLDSVKDQSSKVCSLVFPFVNKTDIRELVYTLDDYDIRYYIFELLKAIDYTHSKGIIHRDIKPLNIAIDHSKRKLSLIDWGLAEYYHPGKNYNVRVASRHYKPPELLVNMFDYDYSLDMWSLGCLFAGLILDRDPFFNGDNNNDQLLKIVKVLGTDDLFNFLDKFGLSLTDEQSSLIKPRQKSNWERFIPYENDDIAQPDAIDFLDKLLRYDPTERLTAKEAMKHPYFKDFNQSIL</sequence>
<evidence type="ECO:0000255" key="1"/>
<evidence type="ECO:0000255" key="2">
    <source>
        <dbReference type="PROSITE-ProRule" id="PRU00159"/>
    </source>
</evidence>
<evidence type="ECO:0000256" key="3">
    <source>
        <dbReference type="SAM" id="MobiDB-lite"/>
    </source>
</evidence>
<evidence type="ECO:0000305" key="4"/>
<comment type="catalytic activity">
    <reaction>
        <text>L-seryl-[protein] + ATP = O-phospho-L-seryl-[protein] + ADP + H(+)</text>
        <dbReference type="Rhea" id="RHEA:17989"/>
        <dbReference type="Rhea" id="RHEA-COMP:9863"/>
        <dbReference type="Rhea" id="RHEA-COMP:11604"/>
        <dbReference type="ChEBI" id="CHEBI:15378"/>
        <dbReference type="ChEBI" id="CHEBI:29999"/>
        <dbReference type="ChEBI" id="CHEBI:30616"/>
        <dbReference type="ChEBI" id="CHEBI:83421"/>
        <dbReference type="ChEBI" id="CHEBI:456216"/>
        <dbReference type="EC" id="2.7.11.1"/>
    </reaction>
</comment>
<comment type="catalytic activity">
    <reaction>
        <text>L-threonyl-[protein] + ATP = O-phospho-L-threonyl-[protein] + ADP + H(+)</text>
        <dbReference type="Rhea" id="RHEA:46608"/>
        <dbReference type="Rhea" id="RHEA-COMP:11060"/>
        <dbReference type="Rhea" id="RHEA-COMP:11605"/>
        <dbReference type="ChEBI" id="CHEBI:15378"/>
        <dbReference type="ChEBI" id="CHEBI:30013"/>
        <dbReference type="ChEBI" id="CHEBI:30616"/>
        <dbReference type="ChEBI" id="CHEBI:61977"/>
        <dbReference type="ChEBI" id="CHEBI:456216"/>
        <dbReference type="EC" id="2.7.11.1"/>
    </reaction>
</comment>
<comment type="subcellular location">
    <subcellularLocation>
        <location evidence="4">Membrane</location>
        <topology evidence="4">Single-pass membrane protein</topology>
    </subcellularLocation>
</comment>
<comment type="similarity">
    <text evidence="4">Belongs to the protein kinase superfamily. CMGC Ser/Thr protein kinase family.</text>
</comment>
<protein>
    <recommendedName>
        <fullName>Probable serine/threonine-protein kinase DDB_G0286481</fullName>
        <ecNumber>2.7.11.1</ecNumber>
    </recommendedName>
</protein>
<gene>
    <name type="ORF">DDB_G0286481</name>
</gene>
<organism>
    <name type="scientific">Dictyostelium discoideum</name>
    <name type="common">Social amoeba</name>
    <dbReference type="NCBI Taxonomy" id="44689"/>
    <lineage>
        <taxon>Eukaryota</taxon>
        <taxon>Amoebozoa</taxon>
        <taxon>Evosea</taxon>
        <taxon>Eumycetozoa</taxon>
        <taxon>Dictyostelia</taxon>
        <taxon>Dictyosteliales</taxon>
        <taxon>Dictyosteliaceae</taxon>
        <taxon>Dictyostelium</taxon>
    </lineage>
</organism>
<name>Y6481_DICDI</name>
<reference key="1">
    <citation type="journal article" date="2005" name="Nature">
        <title>The genome of the social amoeba Dictyostelium discoideum.</title>
        <authorList>
            <person name="Eichinger L."/>
            <person name="Pachebat J.A."/>
            <person name="Gloeckner G."/>
            <person name="Rajandream M.A."/>
            <person name="Sucgang R."/>
            <person name="Berriman M."/>
            <person name="Song J."/>
            <person name="Olsen R."/>
            <person name="Szafranski K."/>
            <person name="Xu Q."/>
            <person name="Tunggal B."/>
            <person name="Kummerfeld S."/>
            <person name="Madera M."/>
            <person name="Konfortov B.A."/>
            <person name="Rivero F."/>
            <person name="Bankier A.T."/>
            <person name="Lehmann R."/>
            <person name="Hamlin N."/>
            <person name="Davies R."/>
            <person name="Gaudet P."/>
            <person name="Fey P."/>
            <person name="Pilcher K."/>
            <person name="Chen G."/>
            <person name="Saunders D."/>
            <person name="Sodergren E.J."/>
            <person name="Davis P."/>
            <person name="Kerhornou A."/>
            <person name="Nie X."/>
            <person name="Hall N."/>
            <person name="Anjard C."/>
            <person name="Hemphill L."/>
            <person name="Bason N."/>
            <person name="Farbrother P."/>
            <person name="Desany B."/>
            <person name="Just E."/>
            <person name="Morio T."/>
            <person name="Rost R."/>
            <person name="Churcher C.M."/>
            <person name="Cooper J."/>
            <person name="Haydock S."/>
            <person name="van Driessche N."/>
            <person name="Cronin A."/>
            <person name="Goodhead I."/>
            <person name="Muzny D.M."/>
            <person name="Mourier T."/>
            <person name="Pain A."/>
            <person name="Lu M."/>
            <person name="Harper D."/>
            <person name="Lindsay R."/>
            <person name="Hauser H."/>
            <person name="James K.D."/>
            <person name="Quiles M."/>
            <person name="Madan Babu M."/>
            <person name="Saito T."/>
            <person name="Buchrieser C."/>
            <person name="Wardroper A."/>
            <person name="Felder M."/>
            <person name="Thangavelu M."/>
            <person name="Johnson D."/>
            <person name="Knights A."/>
            <person name="Loulseged H."/>
            <person name="Mungall K.L."/>
            <person name="Oliver K."/>
            <person name="Price C."/>
            <person name="Quail M.A."/>
            <person name="Urushihara H."/>
            <person name="Hernandez J."/>
            <person name="Rabbinowitsch E."/>
            <person name="Steffen D."/>
            <person name="Sanders M."/>
            <person name="Ma J."/>
            <person name="Kohara Y."/>
            <person name="Sharp S."/>
            <person name="Simmonds M.N."/>
            <person name="Spiegler S."/>
            <person name="Tivey A."/>
            <person name="Sugano S."/>
            <person name="White B."/>
            <person name="Walker D."/>
            <person name="Woodward J.R."/>
            <person name="Winckler T."/>
            <person name="Tanaka Y."/>
            <person name="Shaulsky G."/>
            <person name="Schleicher M."/>
            <person name="Weinstock G.M."/>
            <person name="Rosenthal A."/>
            <person name="Cox E.C."/>
            <person name="Chisholm R.L."/>
            <person name="Gibbs R.A."/>
            <person name="Loomis W.F."/>
            <person name="Platzer M."/>
            <person name="Kay R.R."/>
            <person name="Williams J.G."/>
            <person name="Dear P.H."/>
            <person name="Noegel A.A."/>
            <person name="Barrell B.G."/>
            <person name="Kuspa A."/>
        </authorList>
    </citation>
    <scope>NUCLEOTIDE SEQUENCE [LARGE SCALE GENOMIC DNA]</scope>
    <source>
        <strain>AX4</strain>
    </source>
</reference>
<feature type="chain" id="PRO_0000362060" description="Probable serine/threonine-protein kinase DDB_G0286481">
    <location>
        <begin position="1"/>
        <end position="605"/>
    </location>
</feature>
<feature type="transmembrane region" description="Helical" evidence="1">
    <location>
        <begin position="5"/>
        <end position="25"/>
    </location>
</feature>
<feature type="domain" description="Protein kinase" evidence="2">
    <location>
        <begin position="312"/>
        <end position="597"/>
    </location>
</feature>
<feature type="region of interest" description="Disordered" evidence="3">
    <location>
        <begin position="54"/>
        <end position="170"/>
    </location>
</feature>
<feature type="compositionally biased region" description="Low complexity" evidence="3">
    <location>
        <begin position="54"/>
        <end position="81"/>
    </location>
</feature>
<feature type="compositionally biased region" description="Low complexity" evidence="3">
    <location>
        <begin position="89"/>
        <end position="104"/>
    </location>
</feature>
<feature type="compositionally biased region" description="Basic residues" evidence="3">
    <location>
        <begin position="105"/>
        <end position="123"/>
    </location>
</feature>
<feature type="compositionally biased region" description="Polar residues" evidence="3">
    <location>
        <begin position="144"/>
        <end position="155"/>
    </location>
</feature>
<feature type="active site" description="Proton acceptor" evidence="2">
    <location>
        <position position="429"/>
    </location>
</feature>
<feature type="binding site" evidence="2">
    <location>
        <begin position="318"/>
        <end position="326"/>
    </location>
    <ligand>
        <name>ATP</name>
        <dbReference type="ChEBI" id="CHEBI:30616"/>
    </ligand>
</feature>
<feature type="binding site" evidence="2">
    <location>
        <position position="341"/>
    </location>
    <ligand>
        <name>ATP</name>
        <dbReference type="ChEBI" id="CHEBI:30616"/>
    </ligand>
</feature>
<feature type="glycosylation site" description="N-linked (GlcNAc...) asparagine" evidence="1">
    <location>
        <position position="53"/>
    </location>
</feature>
<feature type="glycosylation site" description="N-linked (GlcNAc...) asparagine" evidence="1">
    <location>
        <position position="92"/>
    </location>
</feature>
<feature type="glycosylation site" description="N-linked (GlcNAc...) asparagine" evidence="1">
    <location>
        <position position="93"/>
    </location>
</feature>
<feature type="glycosylation site" description="N-linked (GlcNAc...) asparagine" evidence="1">
    <location>
        <position position="97"/>
    </location>
</feature>
<feature type="glycosylation site" description="N-linked (GlcNAc...) asparagine" evidence="1">
    <location>
        <position position="101"/>
    </location>
</feature>
<feature type="glycosylation site" description="N-linked (GlcNAc...) asparagine" evidence="1">
    <location>
        <position position="127"/>
    </location>
</feature>
<feature type="glycosylation site" description="N-linked (GlcNAc...) asparagine" evidence="1">
    <location>
        <position position="280"/>
    </location>
</feature>
<feature type="glycosylation site" description="N-linked (GlcNAc...) asparagine" evidence="1">
    <location>
        <position position="390"/>
    </location>
</feature>
<feature type="glycosylation site" description="N-linked (GlcNAc...) asparagine" evidence="1">
    <location>
        <position position="601"/>
    </location>
</feature>
<accession>Q54LR6</accession>
<proteinExistence type="inferred from homology"/>
<dbReference type="EC" id="2.7.11.1"/>
<dbReference type="EMBL" id="AAFI02000085">
    <property type="protein sequence ID" value="EAL64265.1"/>
    <property type="molecule type" value="Genomic_DNA"/>
</dbReference>
<dbReference type="RefSeq" id="XP_637764.1">
    <property type="nucleotide sequence ID" value="XM_632672.1"/>
</dbReference>
<dbReference type="SMR" id="Q54LR6"/>
<dbReference type="FunCoup" id="Q54LR6">
    <property type="interactions" value="69"/>
</dbReference>
<dbReference type="STRING" id="44689.Q54LR6"/>
<dbReference type="GlyGen" id="Q54LR6">
    <property type="glycosylation" value="9 sites"/>
</dbReference>
<dbReference type="PaxDb" id="44689-DDB0219953"/>
<dbReference type="EnsemblProtists" id="EAL64265">
    <property type="protein sequence ID" value="EAL64265"/>
    <property type="gene ID" value="DDB_G0286481"/>
</dbReference>
<dbReference type="GeneID" id="8625630"/>
<dbReference type="KEGG" id="ddi:DDB_G0286481"/>
<dbReference type="dictyBase" id="DDB_G0286481"/>
<dbReference type="VEuPathDB" id="AmoebaDB:DDB_G0286481"/>
<dbReference type="eggNOG" id="KOG0668">
    <property type="taxonomic scope" value="Eukaryota"/>
</dbReference>
<dbReference type="HOGENOM" id="CLU_451609_0_0_1"/>
<dbReference type="InParanoid" id="Q54LR6"/>
<dbReference type="OMA" id="ECNIHER"/>
<dbReference type="PhylomeDB" id="Q54LR6"/>
<dbReference type="Reactome" id="R-DDI-2514853">
    <property type="pathway name" value="Condensation of Prometaphase Chromosomes"/>
</dbReference>
<dbReference type="Reactome" id="R-DDI-6804756">
    <property type="pathway name" value="Regulation of TP53 Activity through Phosphorylation"/>
</dbReference>
<dbReference type="Reactome" id="R-DDI-8934903">
    <property type="pathway name" value="Receptor Mediated Mitophagy"/>
</dbReference>
<dbReference type="Reactome" id="R-DDI-8948751">
    <property type="pathway name" value="Regulation of PTEN stability and activity"/>
</dbReference>
<dbReference type="PRO" id="PR:Q54LR6"/>
<dbReference type="Proteomes" id="UP000002195">
    <property type="component" value="Chromosome 4"/>
</dbReference>
<dbReference type="GO" id="GO:0005829">
    <property type="term" value="C:cytosol"/>
    <property type="evidence" value="ECO:0000318"/>
    <property type="project" value="GO_Central"/>
</dbReference>
<dbReference type="GO" id="GO:0016020">
    <property type="term" value="C:membrane"/>
    <property type="evidence" value="ECO:0007669"/>
    <property type="project" value="UniProtKB-SubCell"/>
</dbReference>
<dbReference type="GO" id="GO:0005634">
    <property type="term" value="C:nucleus"/>
    <property type="evidence" value="ECO:0000318"/>
    <property type="project" value="GO_Central"/>
</dbReference>
<dbReference type="GO" id="GO:0005956">
    <property type="term" value="C:protein kinase CK2 complex"/>
    <property type="evidence" value="ECO:0000318"/>
    <property type="project" value="GO_Central"/>
</dbReference>
<dbReference type="GO" id="GO:0005524">
    <property type="term" value="F:ATP binding"/>
    <property type="evidence" value="ECO:0007669"/>
    <property type="project" value="UniProtKB-KW"/>
</dbReference>
<dbReference type="GO" id="GO:0106310">
    <property type="term" value="F:protein serine kinase activity"/>
    <property type="evidence" value="ECO:0007669"/>
    <property type="project" value="RHEA"/>
</dbReference>
<dbReference type="GO" id="GO:0004674">
    <property type="term" value="F:protein serine/threonine kinase activity"/>
    <property type="evidence" value="ECO:0000250"/>
    <property type="project" value="dictyBase"/>
</dbReference>
<dbReference type="GO" id="GO:0006974">
    <property type="term" value="P:DNA damage response"/>
    <property type="evidence" value="ECO:0000318"/>
    <property type="project" value="GO_Central"/>
</dbReference>
<dbReference type="GO" id="GO:0006468">
    <property type="term" value="P:protein phosphorylation"/>
    <property type="evidence" value="ECO:0000250"/>
    <property type="project" value="dictyBase"/>
</dbReference>
<dbReference type="GO" id="GO:0051726">
    <property type="term" value="P:regulation of cell cycle"/>
    <property type="evidence" value="ECO:0000318"/>
    <property type="project" value="GO_Central"/>
</dbReference>
<dbReference type="CDD" id="cd14132">
    <property type="entry name" value="STKc_CK2_alpha"/>
    <property type="match status" value="1"/>
</dbReference>
<dbReference type="FunFam" id="1.10.510.10:FF:000059">
    <property type="entry name" value="Casein kinase II subunit alpha"/>
    <property type="match status" value="1"/>
</dbReference>
<dbReference type="FunFam" id="3.30.200.20:FF:000088">
    <property type="entry name" value="Casein kinase II subunit alpha"/>
    <property type="match status" value="1"/>
</dbReference>
<dbReference type="Gene3D" id="3.30.200.20">
    <property type="entry name" value="Phosphorylase Kinase, domain 1"/>
    <property type="match status" value="1"/>
</dbReference>
<dbReference type="Gene3D" id="1.10.510.10">
    <property type="entry name" value="Transferase(Phosphotransferase) domain 1"/>
    <property type="match status" value="1"/>
</dbReference>
<dbReference type="InterPro" id="IPR045216">
    <property type="entry name" value="CK2_alpha"/>
</dbReference>
<dbReference type="InterPro" id="IPR011009">
    <property type="entry name" value="Kinase-like_dom_sf"/>
</dbReference>
<dbReference type="InterPro" id="IPR000719">
    <property type="entry name" value="Prot_kinase_dom"/>
</dbReference>
<dbReference type="InterPro" id="IPR017441">
    <property type="entry name" value="Protein_kinase_ATP_BS"/>
</dbReference>
<dbReference type="PANTHER" id="PTHR24054">
    <property type="entry name" value="CASEIN KINASE II SUBUNIT ALPHA"/>
    <property type="match status" value="1"/>
</dbReference>
<dbReference type="PANTHER" id="PTHR24054:SF51">
    <property type="entry name" value="SERINE_THREONINE-PROTEIN KINASE DDB_G0286481-RELATED"/>
    <property type="match status" value="1"/>
</dbReference>
<dbReference type="Pfam" id="PF00069">
    <property type="entry name" value="Pkinase"/>
    <property type="match status" value="1"/>
</dbReference>
<dbReference type="SMART" id="SM00220">
    <property type="entry name" value="S_TKc"/>
    <property type="match status" value="1"/>
</dbReference>
<dbReference type="SUPFAM" id="SSF56112">
    <property type="entry name" value="Protein kinase-like (PK-like)"/>
    <property type="match status" value="1"/>
</dbReference>
<dbReference type="PROSITE" id="PS00107">
    <property type="entry name" value="PROTEIN_KINASE_ATP"/>
    <property type="match status" value="1"/>
</dbReference>
<dbReference type="PROSITE" id="PS50011">
    <property type="entry name" value="PROTEIN_KINASE_DOM"/>
    <property type="match status" value="1"/>
</dbReference>
<keyword id="KW-0067">ATP-binding</keyword>
<keyword id="KW-0325">Glycoprotein</keyword>
<keyword id="KW-0418">Kinase</keyword>
<keyword id="KW-0472">Membrane</keyword>
<keyword id="KW-0547">Nucleotide-binding</keyword>
<keyword id="KW-1185">Reference proteome</keyword>
<keyword id="KW-0723">Serine/threonine-protein kinase</keyword>
<keyword id="KW-0808">Transferase</keyword>
<keyword id="KW-0812">Transmembrane</keyword>
<keyword id="KW-1133">Transmembrane helix</keyword>